<feature type="chain" id="PRO_0000158493" description="Ribose-5-phosphate isomerase A">
    <location>
        <begin position="1"/>
        <end position="218"/>
    </location>
</feature>
<feature type="active site" description="Proton acceptor" evidence="1">
    <location>
        <position position="103"/>
    </location>
</feature>
<feature type="binding site" evidence="1">
    <location>
        <begin position="28"/>
        <end position="31"/>
    </location>
    <ligand>
        <name>substrate</name>
    </ligand>
</feature>
<feature type="binding site" evidence="1">
    <location>
        <begin position="81"/>
        <end position="84"/>
    </location>
    <ligand>
        <name>substrate</name>
    </ligand>
</feature>
<feature type="binding site" evidence="1">
    <location>
        <begin position="94"/>
        <end position="97"/>
    </location>
    <ligand>
        <name>substrate</name>
    </ligand>
</feature>
<feature type="binding site" evidence="1">
    <location>
        <position position="121"/>
    </location>
    <ligand>
        <name>substrate</name>
    </ligand>
</feature>
<sequence length="218" mass="22971">MTQDEMKKAAGWAALKYVEKGSIVGVGTGSTVNHFIDALGTMSEEIKGAVSSSVASTEKLEALGIKIFDCNEVASLDIYVDGADEINADREMIKGGGAALTREKIVAAIADKFICIVDGTKAVDVLGTFPLPVEVIPMARSYVARQLVKLGGDPCYREGVITDNGNVILDVYGMKITNPKQLEDQINGIPGVVTVGLFAHRGADVVITGTPEGAKIEE</sequence>
<organism>
    <name type="scientific">Vibrio vulnificus (strain CMCP6)</name>
    <dbReference type="NCBI Taxonomy" id="216895"/>
    <lineage>
        <taxon>Bacteria</taxon>
        <taxon>Pseudomonadati</taxon>
        <taxon>Pseudomonadota</taxon>
        <taxon>Gammaproteobacteria</taxon>
        <taxon>Vibrionales</taxon>
        <taxon>Vibrionaceae</taxon>
        <taxon>Vibrio</taxon>
    </lineage>
</organism>
<protein>
    <recommendedName>
        <fullName evidence="1">Ribose-5-phosphate isomerase A</fullName>
        <ecNumber evidence="1">5.3.1.6</ecNumber>
    </recommendedName>
    <alternativeName>
        <fullName evidence="1">Phosphoriboisomerase A</fullName>
        <shortName evidence="1">PRI</shortName>
    </alternativeName>
</protein>
<comment type="function">
    <text evidence="1">Catalyzes the reversible conversion of ribose-5-phosphate to ribulose 5-phosphate.</text>
</comment>
<comment type="catalytic activity">
    <reaction evidence="1">
        <text>aldehydo-D-ribose 5-phosphate = D-ribulose 5-phosphate</text>
        <dbReference type="Rhea" id="RHEA:14657"/>
        <dbReference type="ChEBI" id="CHEBI:58121"/>
        <dbReference type="ChEBI" id="CHEBI:58273"/>
        <dbReference type="EC" id="5.3.1.6"/>
    </reaction>
</comment>
<comment type="pathway">
    <text evidence="1">Carbohydrate degradation; pentose phosphate pathway; D-ribose 5-phosphate from D-ribulose 5-phosphate (non-oxidative stage): step 1/1.</text>
</comment>
<comment type="subunit">
    <text evidence="1">Homodimer.</text>
</comment>
<comment type="similarity">
    <text evidence="1">Belongs to the ribose 5-phosphate isomerase family.</text>
</comment>
<accession>Q8DC93</accession>
<keyword id="KW-0413">Isomerase</keyword>
<proteinExistence type="inferred from homology"/>
<evidence type="ECO:0000255" key="1">
    <source>
        <dbReference type="HAMAP-Rule" id="MF_00170"/>
    </source>
</evidence>
<name>RPIA_VIBVU</name>
<dbReference type="EC" id="5.3.1.6" evidence="1"/>
<dbReference type="EMBL" id="AE016795">
    <property type="protein sequence ID" value="AAO09972.2"/>
    <property type="molecule type" value="Genomic_DNA"/>
</dbReference>
<dbReference type="RefSeq" id="WP_011079483.1">
    <property type="nucleotide sequence ID" value="NC_004459.3"/>
</dbReference>
<dbReference type="SMR" id="Q8DC93"/>
<dbReference type="GeneID" id="93895803"/>
<dbReference type="KEGG" id="vvu:VV1_1547"/>
<dbReference type="HOGENOM" id="CLU_056590_1_1_6"/>
<dbReference type="UniPathway" id="UPA00115">
    <property type="reaction ID" value="UER00412"/>
</dbReference>
<dbReference type="Proteomes" id="UP000002275">
    <property type="component" value="Chromosome 1"/>
</dbReference>
<dbReference type="GO" id="GO:0005829">
    <property type="term" value="C:cytosol"/>
    <property type="evidence" value="ECO:0007669"/>
    <property type="project" value="TreeGrafter"/>
</dbReference>
<dbReference type="GO" id="GO:0004751">
    <property type="term" value="F:ribose-5-phosphate isomerase activity"/>
    <property type="evidence" value="ECO:0007669"/>
    <property type="project" value="UniProtKB-UniRule"/>
</dbReference>
<dbReference type="GO" id="GO:0006014">
    <property type="term" value="P:D-ribose metabolic process"/>
    <property type="evidence" value="ECO:0007669"/>
    <property type="project" value="TreeGrafter"/>
</dbReference>
<dbReference type="GO" id="GO:0009052">
    <property type="term" value="P:pentose-phosphate shunt, non-oxidative branch"/>
    <property type="evidence" value="ECO:0007669"/>
    <property type="project" value="UniProtKB-UniRule"/>
</dbReference>
<dbReference type="CDD" id="cd01398">
    <property type="entry name" value="RPI_A"/>
    <property type="match status" value="1"/>
</dbReference>
<dbReference type="FunFam" id="3.30.70.260:FF:000004">
    <property type="entry name" value="Ribose-5-phosphate isomerase A"/>
    <property type="match status" value="1"/>
</dbReference>
<dbReference type="FunFam" id="3.40.50.1360:FF:000001">
    <property type="entry name" value="Ribose-5-phosphate isomerase A"/>
    <property type="match status" value="1"/>
</dbReference>
<dbReference type="Gene3D" id="3.30.70.260">
    <property type="match status" value="1"/>
</dbReference>
<dbReference type="Gene3D" id="3.40.50.1360">
    <property type="match status" value="1"/>
</dbReference>
<dbReference type="HAMAP" id="MF_00170">
    <property type="entry name" value="Rib_5P_isom_A"/>
    <property type="match status" value="1"/>
</dbReference>
<dbReference type="InterPro" id="IPR037171">
    <property type="entry name" value="NagB/RpiA_transferase-like"/>
</dbReference>
<dbReference type="InterPro" id="IPR020672">
    <property type="entry name" value="Ribose5P_isomerase_typA_subgr"/>
</dbReference>
<dbReference type="InterPro" id="IPR004788">
    <property type="entry name" value="Ribose5P_isomerase_type_A"/>
</dbReference>
<dbReference type="NCBIfam" id="NF001924">
    <property type="entry name" value="PRK00702.1"/>
    <property type="match status" value="1"/>
</dbReference>
<dbReference type="NCBIfam" id="TIGR00021">
    <property type="entry name" value="rpiA"/>
    <property type="match status" value="1"/>
</dbReference>
<dbReference type="PANTHER" id="PTHR11934">
    <property type="entry name" value="RIBOSE-5-PHOSPHATE ISOMERASE"/>
    <property type="match status" value="1"/>
</dbReference>
<dbReference type="PANTHER" id="PTHR11934:SF0">
    <property type="entry name" value="RIBOSE-5-PHOSPHATE ISOMERASE"/>
    <property type="match status" value="1"/>
</dbReference>
<dbReference type="Pfam" id="PF06026">
    <property type="entry name" value="Rib_5-P_isom_A"/>
    <property type="match status" value="1"/>
</dbReference>
<dbReference type="SUPFAM" id="SSF75445">
    <property type="entry name" value="D-ribose-5-phosphate isomerase (RpiA), lid domain"/>
    <property type="match status" value="1"/>
</dbReference>
<dbReference type="SUPFAM" id="SSF100950">
    <property type="entry name" value="NagB/RpiA/CoA transferase-like"/>
    <property type="match status" value="1"/>
</dbReference>
<gene>
    <name evidence="1" type="primary">rpiA</name>
    <name type="ordered locus">VV1_1547</name>
</gene>
<reference key="1">
    <citation type="submission" date="2002-12" db="EMBL/GenBank/DDBJ databases">
        <title>Complete genome sequence of Vibrio vulnificus CMCP6.</title>
        <authorList>
            <person name="Rhee J.H."/>
            <person name="Kim S.Y."/>
            <person name="Chung S.S."/>
            <person name="Kim J.J."/>
            <person name="Moon Y.H."/>
            <person name="Jeong H."/>
            <person name="Choy H.E."/>
        </authorList>
    </citation>
    <scope>NUCLEOTIDE SEQUENCE [LARGE SCALE GENOMIC DNA]</scope>
    <source>
        <strain>CMCP6</strain>
    </source>
</reference>